<proteinExistence type="inferred from homology"/>
<accession>A1JPV4</accession>
<sequence>MINDVISPEFDENGRAMRRIRSFVRRQGRLTKGQQLALDNYWPVMGVEYQPTPVDFTALFGREAPVVLEIGFGMGTSLVTMAASNPQQNFLGIEVHSPGVGACLASAHEAGLNNLRVMCHDAVEVLENMIPDSSLDMVQLFFPDPWHKARHNKRRIVQAPFVELVKSKLKVGGVFHMATDWQHYAEHMLEVMSGANGYRNLSEQNDYVPRPDSRPLTKFELRGQRLGHGVWDLMFERKE</sequence>
<keyword id="KW-0489">Methyltransferase</keyword>
<keyword id="KW-0949">S-adenosyl-L-methionine</keyword>
<keyword id="KW-0808">Transferase</keyword>
<keyword id="KW-0819">tRNA processing</keyword>
<dbReference type="EC" id="2.1.1.33" evidence="2"/>
<dbReference type="EMBL" id="AM286415">
    <property type="protein sequence ID" value="CAL13466.1"/>
    <property type="molecule type" value="Genomic_DNA"/>
</dbReference>
<dbReference type="RefSeq" id="WP_005173629.1">
    <property type="nucleotide sequence ID" value="NC_008800.1"/>
</dbReference>
<dbReference type="RefSeq" id="YP_001007608.1">
    <property type="nucleotide sequence ID" value="NC_008800.1"/>
</dbReference>
<dbReference type="SMR" id="A1JPV4"/>
<dbReference type="KEGG" id="yen:YE3442"/>
<dbReference type="PATRIC" id="fig|393305.7.peg.3656"/>
<dbReference type="eggNOG" id="COG0220">
    <property type="taxonomic scope" value="Bacteria"/>
</dbReference>
<dbReference type="HOGENOM" id="CLU_050910_0_1_6"/>
<dbReference type="OrthoDB" id="9802090at2"/>
<dbReference type="UniPathway" id="UPA00989"/>
<dbReference type="Proteomes" id="UP000000642">
    <property type="component" value="Chromosome"/>
</dbReference>
<dbReference type="GO" id="GO:0043527">
    <property type="term" value="C:tRNA methyltransferase complex"/>
    <property type="evidence" value="ECO:0007669"/>
    <property type="project" value="TreeGrafter"/>
</dbReference>
<dbReference type="GO" id="GO:0008176">
    <property type="term" value="F:tRNA (guanine(46)-N7)-methyltransferase activity"/>
    <property type="evidence" value="ECO:0007669"/>
    <property type="project" value="UniProtKB-UniRule"/>
</dbReference>
<dbReference type="CDD" id="cd02440">
    <property type="entry name" value="AdoMet_MTases"/>
    <property type="match status" value="1"/>
</dbReference>
<dbReference type="FunFam" id="3.40.50.150:FF:000024">
    <property type="entry name" value="tRNA (guanine-N(7)-)-methyltransferase"/>
    <property type="match status" value="1"/>
</dbReference>
<dbReference type="Gene3D" id="3.40.50.150">
    <property type="entry name" value="Vaccinia Virus protein VP39"/>
    <property type="match status" value="1"/>
</dbReference>
<dbReference type="HAMAP" id="MF_01057">
    <property type="entry name" value="tRNA_methyltr_TrmB"/>
    <property type="match status" value="1"/>
</dbReference>
<dbReference type="InterPro" id="IPR029063">
    <property type="entry name" value="SAM-dependent_MTases_sf"/>
</dbReference>
<dbReference type="InterPro" id="IPR003358">
    <property type="entry name" value="tRNA_(Gua-N-7)_MeTrfase_Trmb"/>
</dbReference>
<dbReference type="InterPro" id="IPR055361">
    <property type="entry name" value="tRNA_methyltr_TrmB_bact"/>
</dbReference>
<dbReference type="NCBIfam" id="TIGR00091">
    <property type="entry name" value="tRNA (guanosine(46)-N7)-methyltransferase TrmB"/>
    <property type="match status" value="1"/>
</dbReference>
<dbReference type="PANTHER" id="PTHR23417">
    <property type="entry name" value="3-DEOXY-D-MANNO-OCTULOSONIC-ACID TRANSFERASE/TRNA GUANINE-N 7 - -METHYLTRANSFERASE"/>
    <property type="match status" value="1"/>
</dbReference>
<dbReference type="PANTHER" id="PTHR23417:SF14">
    <property type="entry name" value="PENTACOTRIPEPTIDE-REPEAT REGION OF PRORP DOMAIN-CONTAINING PROTEIN"/>
    <property type="match status" value="1"/>
</dbReference>
<dbReference type="Pfam" id="PF02390">
    <property type="entry name" value="Methyltransf_4"/>
    <property type="match status" value="1"/>
</dbReference>
<dbReference type="SUPFAM" id="SSF53335">
    <property type="entry name" value="S-adenosyl-L-methionine-dependent methyltransferases"/>
    <property type="match status" value="1"/>
</dbReference>
<dbReference type="PROSITE" id="PS51625">
    <property type="entry name" value="SAM_MT_TRMB"/>
    <property type="match status" value="1"/>
</dbReference>
<feature type="chain" id="PRO_0000288249" description="tRNA (guanine-N(7)-)-methyltransferase">
    <location>
        <begin position="1"/>
        <end position="239"/>
    </location>
</feature>
<feature type="region of interest" description="Interaction with RNA" evidence="2">
    <location>
        <begin position="150"/>
        <end position="155"/>
    </location>
</feature>
<feature type="active site" evidence="1">
    <location>
        <position position="144"/>
    </location>
</feature>
<feature type="binding site" evidence="2">
    <location>
        <position position="69"/>
    </location>
    <ligand>
        <name>S-adenosyl-L-methionine</name>
        <dbReference type="ChEBI" id="CHEBI:59789"/>
    </ligand>
</feature>
<feature type="binding site" evidence="2">
    <location>
        <position position="94"/>
    </location>
    <ligand>
        <name>S-adenosyl-L-methionine</name>
        <dbReference type="ChEBI" id="CHEBI:59789"/>
    </ligand>
</feature>
<feature type="binding site" evidence="2">
    <location>
        <position position="121"/>
    </location>
    <ligand>
        <name>S-adenosyl-L-methionine</name>
        <dbReference type="ChEBI" id="CHEBI:59789"/>
    </ligand>
</feature>
<feature type="binding site" evidence="2">
    <location>
        <position position="144"/>
    </location>
    <ligand>
        <name>S-adenosyl-L-methionine</name>
        <dbReference type="ChEBI" id="CHEBI:59789"/>
    </ligand>
</feature>
<feature type="binding site" evidence="2">
    <location>
        <position position="148"/>
    </location>
    <ligand>
        <name>substrate</name>
    </ligand>
</feature>
<feature type="binding site" evidence="2">
    <location>
        <position position="180"/>
    </location>
    <ligand>
        <name>substrate</name>
    </ligand>
</feature>
<feature type="binding site" evidence="2">
    <location>
        <begin position="217"/>
        <end position="220"/>
    </location>
    <ligand>
        <name>substrate</name>
    </ligand>
</feature>
<comment type="function">
    <text evidence="2">Catalyzes the formation of N(7)-methylguanine at position 46 (m7G46) in tRNA.</text>
</comment>
<comment type="catalytic activity">
    <reaction evidence="2">
        <text>guanosine(46) in tRNA + S-adenosyl-L-methionine = N(7)-methylguanosine(46) in tRNA + S-adenosyl-L-homocysteine</text>
        <dbReference type="Rhea" id="RHEA:42708"/>
        <dbReference type="Rhea" id="RHEA-COMP:10188"/>
        <dbReference type="Rhea" id="RHEA-COMP:10189"/>
        <dbReference type="ChEBI" id="CHEBI:57856"/>
        <dbReference type="ChEBI" id="CHEBI:59789"/>
        <dbReference type="ChEBI" id="CHEBI:74269"/>
        <dbReference type="ChEBI" id="CHEBI:74480"/>
        <dbReference type="EC" id="2.1.1.33"/>
    </reaction>
</comment>
<comment type="pathway">
    <text evidence="2">tRNA modification; N(7)-methylguanine-tRNA biosynthesis.</text>
</comment>
<comment type="subunit">
    <text evidence="2">Monomer.</text>
</comment>
<comment type="similarity">
    <text evidence="2">Belongs to the class I-like SAM-binding methyltransferase superfamily. TrmB family.</text>
</comment>
<organism>
    <name type="scientific">Yersinia enterocolitica serotype O:8 / biotype 1B (strain NCTC 13174 / 8081)</name>
    <dbReference type="NCBI Taxonomy" id="393305"/>
    <lineage>
        <taxon>Bacteria</taxon>
        <taxon>Pseudomonadati</taxon>
        <taxon>Pseudomonadota</taxon>
        <taxon>Gammaproteobacteria</taxon>
        <taxon>Enterobacterales</taxon>
        <taxon>Yersiniaceae</taxon>
        <taxon>Yersinia</taxon>
    </lineage>
</organism>
<protein>
    <recommendedName>
        <fullName evidence="2">tRNA (guanine-N(7)-)-methyltransferase</fullName>
        <ecNumber evidence="2">2.1.1.33</ecNumber>
    </recommendedName>
    <alternativeName>
        <fullName evidence="2">tRNA (guanine(46)-N(7))-methyltransferase</fullName>
    </alternativeName>
    <alternativeName>
        <fullName evidence="2">tRNA(m7G46)-methyltransferase</fullName>
    </alternativeName>
</protein>
<evidence type="ECO:0000250" key="1"/>
<evidence type="ECO:0000255" key="2">
    <source>
        <dbReference type="HAMAP-Rule" id="MF_01057"/>
    </source>
</evidence>
<reference key="1">
    <citation type="journal article" date="2006" name="PLoS Genet.">
        <title>The complete genome sequence and comparative genome analysis of the high pathogenicity Yersinia enterocolitica strain 8081.</title>
        <authorList>
            <person name="Thomson N.R."/>
            <person name="Howard S."/>
            <person name="Wren B.W."/>
            <person name="Holden M.T.G."/>
            <person name="Crossman L."/>
            <person name="Challis G.L."/>
            <person name="Churcher C."/>
            <person name="Mungall K."/>
            <person name="Brooks K."/>
            <person name="Chillingworth T."/>
            <person name="Feltwell T."/>
            <person name="Abdellah Z."/>
            <person name="Hauser H."/>
            <person name="Jagels K."/>
            <person name="Maddison M."/>
            <person name="Moule S."/>
            <person name="Sanders M."/>
            <person name="Whitehead S."/>
            <person name="Quail M.A."/>
            <person name="Dougan G."/>
            <person name="Parkhill J."/>
            <person name="Prentice M.B."/>
        </authorList>
    </citation>
    <scope>NUCLEOTIDE SEQUENCE [LARGE SCALE GENOMIC DNA]</scope>
    <source>
        <strain>NCTC 13174 / 8081</strain>
    </source>
</reference>
<name>TRMB_YERE8</name>
<gene>
    <name evidence="2" type="primary">trmB</name>
    <name type="ordered locus">YE3442</name>
</gene>